<evidence type="ECO:0000255" key="1">
    <source>
        <dbReference type="HAMAP-Rule" id="MF_00672"/>
    </source>
</evidence>
<accession>B5YZ23</accession>
<proteinExistence type="inferred from homology"/>
<reference key="1">
    <citation type="journal article" date="2011" name="Proc. Natl. Acad. Sci. U.S.A.">
        <title>Genomic anatomy of Escherichia coli O157:H7 outbreaks.</title>
        <authorList>
            <person name="Eppinger M."/>
            <person name="Mammel M.K."/>
            <person name="Leclerc J.E."/>
            <person name="Ravel J."/>
            <person name="Cebula T.A."/>
        </authorList>
    </citation>
    <scope>NUCLEOTIDE SEQUENCE [LARGE SCALE GENOMIC DNA]</scope>
    <source>
        <strain>EC4115 / EHEC</strain>
    </source>
</reference>
<name>YIHY_ECO5E</name>
<dbReference type="EMBL" id="CP001164">
    <property type="protein sequence ID" value="ACI37076.1"/>
    <property type="molecule type" value="Genomic_DNA"/>
</dbReference>
<dbReference type="RefSeq" id="WP_000920762.1">
    <property type="nucleotide sequence ID" value="NC_011353.1"/>
</dbReference>
<dbReference type="KEGG" id="ecf:ECH74115_5333"/>
<dbReference type="HOGENOM" id="CLU_032288_0_0_6"/>
<dbReference type="GO" id="GO:0005886">
    <property type="term" value="C:plasma membrane"/>
    <property type="evidence" value="ECO:0007669"/>
    <property type="project" value="UniProtKB-SubCell"/>
</dbReference>
<dbReference type="HAMAP" id="MF_00672">
    <property type="entry name" value="UPF0761"/>
    <property type="match status" value="1"/>
</dbReference>
<dbReference type="InterPro" id="IPR023679">
    <property type="entry name" value="UPF0761_bac"/>
</dbReference>
<dbReference type="InterPro" id="IPR017039">
    <property type="entry name" value="Virul_fac_BrkB"/>
</dbReference>
<dbReference type="NCBIfam" id="NF002457">
    <property type="entry name" value="PRK01637.1"/>
    <property type="match status" value="1"/>
</dbReference>
<dbReference type="NCBIfam" id="TIGR00765">
    <property type="entry name" value="yihY_not_rbn"/>
    <property type="match status" value="1"/>
</dbReference>
<dbReference type="PANTHER" id="PTHR30213">
    <property type="entry name" value="INNER MEMBRANE PROTEIN YHJD"/>
    <property type="match status" value="1"/>
</dbReference>
<dbReference type="PANTHER" id="PTHR30213:SF0">
    <property type="entry name" value="UPF0761 MEMBRANE PROTEIN YIHY"/>
    <property type="match status" value="1"/>
</dbReference>
<dbReference type="Pfam" id="PF03631">
    <property type="entry name" value="Virul_fac_BrkB"/>
    <property type="match status" value="1"/>
</dbReference>
<dbReference type="PIRSF" id="PIRSF035875">
    <property type="entry name" value="RNase_BN"/>
    <property type="match status" value="1"/>
</dbReference>
<organism>
    <name type="scientific">Escherichia coli O157:H7 (strain EC4115 / EHEC)</name>
    <dbReference type="NCBI Taxonomy" id="444450"/>
    <lineage>
        <taxon>Bacteria</taxon>
        <taxon>Pseudomonadati</taxon>
        <taxon>Pseudomonadota</taxon>
        <taxon>Gammaproteobacteria</taxon>
        <taxon>Enterobacterales</taxon>
        <taxon>Enterobacteriaceae</taxon>
        <taxon>Escherichia</taxon>
    </lineage>
</organism>
<sequence length="290" mass="32839">MLKTIQDKARHRTRPLWAWLKLLWQRIDEDNMTTLAGNLAYVSLLSLVPLVAVVFALFAAFPMFSDVSIQLRHFIFANFLPATGDVIQRYIEQFVANSNKMTAVGACGLIVTALLLMYSIDSALNTIWRSKRARPKIYSFAVYWMILTLGPLLAGASLAISSYLLSLRWASDLNTVIDNVLRIFPLLLSWISFWLLYSIVPTIRVPNRDAIVGAFVAALLFEAGKKGFALYITMFPSYQLIYGVLAVIPILFVWVYWTWCIVLLGAEITVTLGEYRKLKQAAEQEEDDEP</sequence>
<protein>
    <recommendedName>
        <fullName evidence="1">UPF0761 membrane protein YihY</fullName>
    </recommendedName>
</protein>
<feature type="chain" id="PRO_1000131547" description="UPF0761 membrane protein YihY">
    <location>
        <begin position="1"/>
        <end position="290"/>
    </location>
</feature>
<feature type="transmembrane region" description="Helical" evidence="1">
    <location>
        <begin position="44"/>
        <end position="64"/>
    </location>
</feature>
<feature type="transmembrane region" description="Helical" evidence="1">
    <location>
        <begin position="104"/>
        <end position="124"/>
    </location>
</feature>
<feature type="transmembrane region" description="Helical" evidence="1">
    <location>
        <begin position="140"/>
        <end position="160"/>
    </location>
</feature>
<feature type="transmembrane region" description="Helical" evidence="1">
    <location>
        <begin position="183"/>
        <end position="203"/>
    </location>
</feature>
<feature type="transmembrane region" description="Helical" evidence="1">
    <location>
        <begin position="210"/>
        <end position="230"/>
    </location>
</feature>
<feature type="transmembrane region" description="Helical" evidence="1">
    <location>
        <begin position="244"/>
        <end position="264"/>
    </location>
</feature>
<keyword id="KW-0997">Cell inner membrane</keyword>
<keyword id="KW-1003">Cell membrane</keyword>
<keyword id="KW-0472">Membrane</keyword>
<keyword id="KW-0812">Transmembrane</keyword>
<keyword id="KW-1133">Transmembrane helix</keyword>
<gene>
    <name evidence="1" type="primary">yihY</name>
    <name type="ordered locus">ECH74115_5333</name>
</gene>
<comment type="subcellular location">
    <subcellularLocation>
        <location evidence="1">Cell inner membrane</location>
        <topology evidence="1">Multi-pass membrane protein</topology>
    </subcellularLocation>
</comment>
<comment type="similarity">
    <text evidence="1">Belongs to the UPF0761 family.</text>
</comment>